<comment type="function">
    <text evidence="1">Catalyzes the transfer of succinyl-CoA to arginine to produce N(2)-succinylarginine.</text>
</comment>
<comment type="catalytic activity">
    <reaction evidence="1">
        <text>succinyl-CoA + L-arginine = N(2)-succinyl-L-arginine + CoA + H(+)</text>
        <dbReference type="Rhea" id="RHEA:15185"/>
        <dbReference type="ChEBI" id="CHEBI:15378"/>
        <dbReference type="ChEBI" id="CHEBI:32682"/>
        <dbReference type="ChEBI" id="CHEBI:57287"/>
        <dbReference type="ChEBI" id="CHEBI:57292"/>
        <dbReference type="ChEBI" id="CHEBI:58241"/>
        <dbReference type="EC" id="2.3.1.109"/>
    </reaction>
</comment>
<comment type="pathway">
    <text evidence="1">Amino-acid degradation; L-arginine degradation via AST pathway; L-glutamate and succinate from L-arginine: step 1/5.</text>
</comment>
<comment type="similarity">
    <text evidence="1">Belongs to the arginine N-succinyltransferase family.</text>
</comment>
<accession>B7LQ45</accession>
<proteinExistence type="inferred from homology"/>
<keyword id="KW-0012">Acyltransferase</keyword>
<keyword id="KW-0056">Arginine metabolism</keyword>
<keyword id="KW-0808">Transferase</keyword>
<name>ASTA_ESCF3</name>
<feature type="chain" id="PRO_1000137983" description="Arginine N-succinyltransferase">
    <location>
        <begin position="1"/>
        <end position="344"/>
    </location>
</feature>
<feature type="active site" description="Proton donor" evidence="1">
    <location>
        <position position="229"/>
    </location>
</feature>
<feature type="binding site" evidence="1">
    <location>
        <position position="125"/>
    </location>
    <ligand>
        <name>succinyl-CoA</name>
        <dbReference type="ChEBI" id="CHEBI:57292"/>
    </ligand>
</feature>
<gene>
    <name evidence="1" type="primary">astA</name>
    <name type="ordered locus">EFER_1318</name>
</gene>
<evidence type="ECO:0000255" key="1">
    <source>
        <dbReference type="HAMAP-Rule" id="MF_01171"/>
    </source>
</evidence>
<protein>
    <recommendedName>
        <fullName evidence="1">Arginine N-succinyltransferase</fullName>
        <shortName evidence="1">AST</shortName>
        <ecNumber evidence="1">2.3.1.109</ecNumber>
    </recommendedName>
    <alternativeName>
        <fullName evidence="1">AOST</fullName>
    </alternativeName>
</protein>
<dbReference type="EC" id="2.3.1.109" evidence="1"/>
<dbReference type="EMBL" id="CU928158">
    <property type="protein sequence ID" value="CAQ88842.1"/>
    <property type="molecule type" value="Genomic_DNA"/>
</dbReference>
<dbReference type="RefSeq" id="WP_000989454.1">
    <property type="nucleotide sequence ID" value="NC_011740.1"/>
</dbReference>
<dbReference type="SMR" id="B7LQ45"/>
<dbReference type="GeneID" id="75057638"/>
<dbReference type="KEGG" id="efe:EFER_1318"/>
<dbReference type="HOGENOM" id="CLU_057655_0_0_6"/>
<dbReference type="OrthoDB" id="21121at2"/>
<dbReference type="UniPathway" id="UPA00185">
    <property type="reaction ID" value="UER00279"/>
</dbReference>
<dbReference type="Proteomes" id="UP000000745">
    <property type="component" value="Chromosome"/>
</dbReference>
<dbReference type="GO" id="GO:0008791">
    <property type="term" value="F:arginine N-succinyltransferase activity"/>
    <property type="evidence" value="ECO:0007669"/>
    <property type="project" value="UniProtKB-UniRule"/>
</dbReference>
<dbReference type="GO" id="GO:0019544">
    <property type="term" value="P:arginine catabolic process to glutamate"/>
    <property type="evidence" value="ECO:0007669"/>
    <property type="project" value="UniProtKB-UniRule"/>
</dbReference>
<dbReference type="GO" id="GO:0019545">
    <property type="term" value="P:arginine catabolic process to succinate"/>
    <property type="evidence" value="ECO:0007669"/>
    <property type="project" value="UniProtKB-UniRule"/>
</dbReference>
<dbReference type="Gene3D" id="2.40.40.20">
    <property type="match status" value="1"/>
</dbReference>
<dbReference type="Gene3D" id="3.40.630.30">
    <property type="match status" value="1"/>
</dbReference>
<dbReference type="HAMAP" id="MF_01171">
    <property type="entry name" value="AstA"/>
    <property type="match status" value="1"/>
</dbReference>
<dbReference type="InterPro" id="IPR016181">
    <property type="entry name" value="Acyl_CoA_acyltransferase"/>
</dbReference>
<dbReference type="InterPro" id="IPR007041">
    <property type="entry name" value="Arg_succinylTrfase_AstA/AruG"/>
</dbReference>
<dbReference type="InterPro" id="IPR017650">
    <property type="entry name" value="Arginine_N-succinylTrfase"/>
</dbReference>
<dbReference type="NCBIfam" id="TIGR03243">
    <property type="entry name" value="arg_catab_AOST"/>
    <property type="match status" value="1"/>
</dbReference>
<dbReference type="NCBIfam" id="TIGR03244">
    <property type="entry name" value="arg_catab_AstA"/>
    <property type="match status" value="1"/>
</dbReference>
<dbReference type="NCBIfam" id="NF007770">
    <property type="entry name" value="PRK10456.1"/>
    <property type="match status" value="1"/>
</dbReference>
<dbReference type="PANTHER" id="PTHR30420:SF1">
    <property type="entry name" value="ARGININE N-SUCCINYLTRANSFERASE"/>
    <property type="match status" value="1"/>
</dbReference>
<dbReference type="PANTHER" id="PTHR30420">
    <property type="entry name" value="N-SUCCINYLARGININE DIHYDROLASE"/>
    <property type="match status" value="1"/>
</dbReference>
<dbReference type="Pfam" id="PF04958">
    <property type="entry name" value="AstA"/>
    <property type="match status" value="1"/>
</dbReference>
<dbReference type="SUPFAM" id="SSF55729">
    <property type="entry name" value="Acyl-CoA N-acyltransferases (Nat)"/>
    <property type="match status" value="1"/>
</dbReference>
<organism>
    <name type="scientific">Escherichia fergusonii (strain ATCC 35469 / DSM 13698 / CCUG 18766 / IAM 14443 / JCM 21226 / LMG 7866 / NBRC 102419 / NCTC 12128 / CDC 0568-73)</name>
    <dbReference type="NCBI Taxonomy" id="585054"/>
    <lineage>
        <taxon>Bacteria</taxon>
        <taxon>Pseudomonadati</taxon>
        <taxon>Pseudomonadota</taxon>
        <taxon>Gammaproteobacteria</taxon>
        <taxon>Enterobacterales</taxon>
        <taxon>Enterobacteriaceae</taxon>
        <taxon>Escherichia</taxon>
    </lineage>
</organism>
<sequence length="344" mass="38484">MMVIRPVERTDVSALMQLASKTGGGLTSLPANEATLSARIERAIKTWQGELPKSEQGYVFVLEDSETGTVAGICAIEVAVGLNDPWYNYRVGTLVHASKELNVYNALPTLFLSNDHTGSSELCTLFLDPDWRKEGNGYLLSKSRFMFMAAFRDKFNDKVVAEMRGVIDEHGYSPFWQSLGKRFFSMDFSRADFLCGTGQKAFIAELMPKHPIYTHFLSQEAQDVIGQVHPQTAPARAVLEKEGFRYRNYIDIFDGGPTLECDIDRVRAIRKSRLVEVAEGQPAQGEFPACLVANENYHHFRVVLVRTDPATERLILTAAQLDALKCHAGDRVRLVRLCAEEKTA</sequence>
<reference key="1">
    <citation type="journal article" date="2009" name="PLoS Genet.">
        <title>Organised genome dynamics in the Escherichia coli species results in highly diverse adaptive paths.</title>
        <authorList>
            <person name="Touchon M."/>
            <person name="Hoede C."/>
            <person name="Tenaillon O."/>
            <person name="Barbe V."/>
            <person name="Baeriswyl S."/>
            <person name="Bidet P."/>
            <person name="Bingen E."/>
            <person name="Bonacorsi S."/>
            <person name="Bouchier C."/>
            <person name="Bouvet O."/>
            <person name="Calteau A."/>
            <person name="Chiapello H."/>
            <person name="Clermont O."/>
            <person name="Cruveiller S."/>
            <person name="Danchin A."/>
            <person name="Diard M."/>
            <person name="Dossat C."/>
            <person name="Karoui M.E."/>
            <person name="Frapy E."/>
            <person name="Garry L."/>
            <person name="Ghigo J.M."/>
            <person name="Gilles A.M."/>
            <person name="Johnson J."/>
            <person name="Le Bouguenec C."/>
            <person name="Lescat M."/>
            <person name="Mangenot S."/>
            <person name="Martinez-Jehanne V."/>
            <person name="Matic I."/>
            <person name="Nassif X."/>
            <person name="Oztas S."/>
            <person name="Petit M.A."/>
            <person name="Pichon C."/>
            <person name="Rouy Z."/>
            <person name="Ruf C.S."/>
            <person name="Schneider D."/>
            <person name="Tourret J."/>
            <person name="Vacherie B."/>
            <person name="Vallenet D."/>
            <person name="Medigue C."/>
            <person name="Rocha E.P.C."/>
            <person name="Denamur E."/>
        </authorList>
    </citation>
    <scope>NUCLEOTIDE SEQUENCE [LARGE SCALE GENOMIC DNA]</scope>
    <source>
        <strain>ATCC 35469 / DSM 13698 / BCRC 15582 / CCUG 18766 / IAM 14443 / JCM 21226 / LMG 7866 / NBRC 102419 / NCTC 12128 / CDC 0568-73</strain>
    </source>
</reference>